<dbReference type="EMBL" id="AK013992">
    <property type="protein sequence ID" value="BAB29103.1"/>
    <property type="molecule type" value="mRNA"/>
</dbReference>
<dbReference type="EMBL" id="AK156498">
    <property type="protein sequence ID" value="BAE33733.1"/>
    <property type="molecule type" value="mRNA"/>
</dbReference>
<dbReference type="EMBL" id="BC048638">
    <property type="protein sequence ID" value="AAH48638.2"/>
    <property type="molecule type" value="mRNA"/>
</dbReference>
<dbReference type="EMBL" id="BC056438">
    <property type="protein sequence ID" value="AAH56438.1"/>
    <property type="molecule type" value="mRNA"/>
</dbReference>
<dbReference type="CCDS" id="CCDS26625.1"/>
<dbReference type="RefSeq" id="NP_613062.1">
    <property type="nucleotide sequence ID" value="NM_138596.2"/>
</dbReference>
<dbReference type="PDB" id="6W1S">
    <property type="method" value="EM"/>
    <property type="resolution" value="4.02 A"/>
    <property type="chains" value="G=51-135"/>
</dbReference>
<dbReference type="PDB" id="8T1I">
    <property type="method" value="EM"/>
    <property type="resolution" value="4.68 A"/>
    <property type="chains" value="G=1-135"/>
</dbReference>
<dbReference type="PDB" id="8T1L">
    <property type="method" value="EM"/>
    <property type="resolution" value="4.83 A"/>
    <property type="chains" value="G=1-135"/>
</dbReference>
<dbReference type="PDBsum" id="6W1S"/>
<dbReference type="PDBsum" id="8T1I"/>
<dbReference type="PDBsum" id="8T1L"/>
<dbReference type="EMDB" id="EMD-21514"/>
<dbReference type="EMDB" id="EMD-40968"/>
<dbReference type="EMDB" id="EMD-40971"/>
<dbReference type="SMR" id="Q9CXU0"/>
<dbReference type="BioGRID" id="205750">
    <property type="interactions" value="1"/>
</dbReference>
<dbReference type="ComplexPortal" id="CPX-3264">
    <property type="entry name" value="Core mediator complex"/>
</dbReference>
<dbReference type="FunCoup" id="Q9CXU0">
    <property type="interactions" value="2660"/>
</dbReference>
<dbReference type="IntAct" id="Q9CXU0">
    <property type="interactions" value="2"/>
</dbReference>
<dbReference type="STRING" id="10090.ENSMUSP00000022089"/>
<dbReference type="iPTMnet" id="Q9CXU0"/>
<dbReference type="PhosphoSitePlus" id="Q9CXU0"/>
<dbReference type="PaxDb" id="10090-ENSMUSP00000022089"/>
<dbReference type="PeptideAtlas" id="Q9CXU0"/>
<dbReference type="ProteomicsDB" id="295846"/>
<dbReference type="Pumba" id="Q9CXU0"/>
<dbReference type="DNASU" id="28077"/>
<dbReference type="Ensembl" id="ENSMUST00000022089.10">
    <property type="protein sequence ID" value="ENSMUSP00000022089.9"/>
    <property type="gene ID" value="ENSMUSG00000021598.10"/>
</dbReference>
<dbReference type="GeneID" id="28077"/>
<dbReference type="UCSC" id="uc007rcq.1">
    <property type="organism name" value="mouse"/>
</dbReference>
<dbReference type="AGR" id="MGI:106331"/>
<dbReference type="CTD" id="84246"/>
<dbReference type="MGI" id="MGI:106331">
    <property type="gene designation" value="Med10"/>
</dbReference>
<dbReference type="VEuPathDB" id="HostDB:ENSMUSG00000021598"/>
<dbReference type="eggNOG" id="KOG3046">
    <property type="taxonomic scope" value="Eukaryota"/>
</dbReference>
<dbReference type="GeneTree" id="ENSGT00940000166335"/>
<dbReference type="HOGENOM" id="CLU_096169_3_0_1"/>
<dbReference type="InParanoid" id="Q9CXU0"/>
<dbReference type="OMA" id="QYQRAKM"/>
<dbReference type="PhylomeDB" id="Q9CXU0"/>
<dbReference type="TreeFam" id="TF315096"/>
<dbReference type="BioGRID-ORCS" id="28077">
    <property type="hits" value="22 hits in 76 CRISPR screens"/>
</dbReference>
<dbReference type="ChiTaRS" id="Med10">
    <property type="organism name" value="mouse"/>
</dbReference>
<dbReference type="PRO" id="PR:Q9CXU0"/>
<dbReference type="Proteomes" id="UP000000589">
    <property type="component" value="Chromosome 13"/>
</dbReference>
<dbReference type="RNAct" id="Q9CXU0">
    <property type="molecule type" value="protein"/>
</dbReference>
<dbReference type="Bgee" id="ENSMUSG00000021598">
    <property type="expression patterns" value="Expressed in seminiferous tubule of testis and 274 other cell types or tissues"/>
</dbReference>
<dbReference type="ExpressionAtlas" id="Q9CXU0">
    <property type="expression patterns" value="baseline and differential"/>
</dbReference>
<dbReference type="GO" id="GO:0070847">
    <property type="term" value="C:core mediator complex"/>
    <property type="evidence" value="ECO:0000266"/>
    <property type="project" value="ComplexPortal"/>
</dbReference>
<dbReference type="GO" id="GO:0016592">
    <property type="term" value="C:mediator complex"/>
    <property type="evidence" value="ECO:0000314"/>
    <property type="project" value="MGI"/>
</dbReference>
<dbReference type="GO" id="GO:0005654">
    <property type="term" value="C:nucleoplasm"/>
    <property type="evidence" value="ECO:0000304"/>
    <property type="project" value="Reactome"/>
</dbReference>
<dbReference type="GO" id="GO:0005634">
    <property type="term" value="C:nucleus"/>
    <property type="evidence" value="ECO:0000266"/>
    <property type="project" value="ComplexPortal"/>
</dbReference>
<dbReference type="GO" id="GO:0000151">
    <property type="term" value="C:ubiquitin ligase complex"/>
    <property type="evidence" value="ECO:0007669"/>
    <property type="project" value="Ensembl"/>
</dbReference>
<dbReference type="GO" id="GO:0003712">
    <property type="term" value="F:transcription coregulator activity"/>
    <property type="evidence" value="ECO:0007669"/>
    <property type="project" value="InterPro"/>
</dbReference>
<dbReference type="GO" id="GO:0061630">
    <property type="term" value="F:ubiquitin protein ligase activity"/>
    <property type="evidence" value="ECO:0007669"/>
    <property type="project" value="Ensembl"/>
</dbReference>
<dbReference type="GO" id="GO:0045944">
    <property type="term" value="P:positive regulation of transcription by RNA polymerase II"/>
    <property type="evidence" value="ECO:0000314"/>
    <property type="project" value="MGI"/>
</dbReference>
<dbReference type="GO" id="GO:0032968">
    <property type="term" value="P:positive regulation of transcription elongation by RNA polymerase II"/>
    <property type="evidence" value="ECO:0000303"/>
    <property type="project" value="ComplexPortal"/>
</dbReference>
<dbReference type="GO" id="GO:0060261">
    <property type="term" value="P:positive regulation of transcription initiation by RNA polymerase II"/>
    <property type="evidence" value="ECO:0000303"/>
    <property type="project" value="ComplexPortal"/>
</dbReference>
<dbReference type="GO" id="GO:0016567">
    <property type="term" value="P:protein ubiquitination"/>
    <property type="evidence" value="ECO:0007669"/>
    <property type="project" value="Ensembl"/>
</dbReference>
<dbReference type="GO" id="GO:0051123">
    <property type="term" value="P:RNA polymerase II preinitiation complex assembly"/>
    <property type="evidence" value="ECO:0000303"/>
    <property type="project" value="ComplexPortal"/>
</dbReference>
<dbReference type="GO" id="GO:0035019">
    <property type="term" value="P:somatic stem cell population maintenance"/>
    <property type="evidence" value="ECO:0000315"/>
    <property type="project" value="MGI"/>
</dbReference>
<dbReference type="InterPro" id="IPR019145">
    <property type="entry name" value="Mediator_Med10"/>
</dbReference>
<dbReference type="PANTHER" id="PTHR13345">
    <property type="entry name" value="MEDIATOR OF RNA POLYMERASE II TRANSCRIPTION SUBUNIT 10"/>
    <property type="match status" value="1"/>
</dbReference>
<dbReference type="PANTHER" id="PTHR13345:SF13">
    <property type="entry name" value="MEDIATOR OF RNA POLYMERASE II TRANSCRIPTION SUBUNIT 10"/>
    <property type="match status" value="1"/>
</dbReference>
<dbReference type="Pfam" id="PF09748">
    <property type="entry name" value="Med10"/>
    <property type="match status" value="1"/>
</dbReference>
<gene>
    <name type="primary">Med10</name>
    <name type="synonym">D13Wsu50e</name>
</gene>
<feature type="chain" id="PRO_0000303153" description="Mediator of RNA polymerase II transcription subunit 10">
    <location>
        <begin position="1"/>
        <end position="135"/>
    </location>
</feature>
<feature type="sequence conflict" description="In Ref. 1; BAE33733." evidence="2" ref="1">
    <original>E</original>
    <variation>G</variation>
    <location>
        <position position="130"/>
    </location>
</feature>
<organism>
    <name type="scientific">Mus musculus</name>
    <name type="common">Mouse</name>
    <dbReference type="NCBI Taxonomy" id="10090"/>
    <lineage>
        <taxon>Eukaryota</taxon>
        <taxon>Metazoa</taxon>
        <taxon>Chordata</taxon>
        <taxon>Craniata</taxon>
        <taxon>Vertebrata</taxon>
        <taxon>Euteleostomi</taxon>
        <taxon>Mammalia</taxon>
        <taxon>Eutheria</taxon>
        <taxon>Euarchontoglires</taxon>
        <taxon>Glires</taxon>
        <taxon>Rodentia</taxon>
        <taxon>Myomorpha</taxon>
        <taxon>Muroidea</taxon>
        <taxon>Muridae</taxon>
        <taxon>Murinae</taxon>
        <taxon>Mus</taxon>
        <taxon>Mus</taxon>
    </lineage>
</organism>
<reference key="1">
    <citation type="journal article" date="2005" name="Science">
        <title>The transcriptional landscape of the mammalian genome.</title>
        <authorList>
            <person name="Carninci P."/>
            <person name="Kasukawa T."/>
            <person name="Katayama S."/>
            <person name="Gough J."/>
            <person name="Frith M.C."/>
            <person name="Maeda N."/>
            <person name="Oyama R."/>
            <person name="Ravasi T."/>
            <person name="Lenhard B."/>
            <person name="Wells C."/>
            <person name="Kodzius R."/>
            <person name="Shimokawa K."/>
            <person name="Bajic V.B."/>
            <person name="Brenner S.E."/>
            <person name="Batalov S."/>
            <person name="Forrest A.R."/>
            <person name="Zavolan M."/>
            <person name="Davis M.J."/>
            <person name="Wilming L.G."/>
            <person name="Aidinis V."/>
            <person name="Allen J.E."/>
            <person name="Ambesi-Impiombato A."/>
            <person name="Apweiler R."/>
            <person name="Aturaliya R.N."/>
            <person name="Bailey T.L."/>
            <person name="Bansal M."/>
            <person name="Baxter L."/>
            <person name="Beisel K.W."/>
            <person name="Bersano T."/>
            <person name="Bono H."/>
            <person name="Chalk A.M."/>
            <person name="Chiu K.P."/>
            <person name="Choudhary V."/>
            <person name="Christoffels A."/>
            <person name="Clutterbuck D.R."/>
            <person name="Crowe M.L."/>
            <person name="Dalla E."/>
            <person name="Dalrymple B.P."/>
            <person name="de Bono B."/>
            <person name="Della Gatta G."/>
            <person name="di Bernardo D."/>
            <person name="Down T."/>
            <person name="Engstrom P."/>
            <person name="Fagiolini M."/>
            <person name="Faulkner G."/>
            <person name="Fletcher C.F."/>
            <person name="Fukushima T."/>
            <person name="Furuno M."/>
            <person name="Futaki S."/>
            <person name="Gariboldi M."/>
            <person name="Georgii-Hemming P."/>
            <person name="Gingeras T.R."/>
            <person name="Gojobori T."/>
            <person name="Green R.E."/>
            <person name="Gustincich S."/>
            <person name="Harbers M."/>
            <person name="Hayashi Y."/>
            <person name="Hensch T.K."/>
            <person name="Hirokawa N."/>
            <person name="Hill D."/>
            <person name="Huminiecki L."/>
            <person name="Iacono M."/>
            <person name="Ikeo K."/>
            <person name="Iwama A."/>
            <person name="Ishikawa T."/>
            <person name="Jakt M."/>
            <person name="Kanapin A."/>
            <person name="Katoh M."/>
            <person name="Kawasawa Y."/>
            <person name="Kelso J."/>
            <person name="Kitamura H."/>
            <person name="Kitano H."/>
            <person name="Kollias G."/>
            <person name="Krishnan S.P."/>
            <person name="Kruger A."/>
            <person name="Kummerfeld S.K."/>
            <person name="Kurochkin I.V."/>
            <person name="Lareau L.F."/>
            <person name="Lazarevic D."/>
            <person name="Lipovich L."/>
            <person name="Liu J."/>
            <person name="Liuni S."/>
            <person name="McWilliam S."/>
            <person name="Madan Babu M."/>
            <person name="Madera M."/>
            <person name="Marchionni L."/>
            <person name="Matsuda H."/>
            <person name="Matsuzawa S."/>
            <person name="Miki H."/>
            <person name="Mignone F."/>
            <person name="Miyake S."/>
            <person name="Morris K."/>
            <person name="Mottagui-Tabar S."/>
            <person name="Mulder N."/>
            <person name="Nakano N."/>
            <person name="Nakauchi H."/>
            <person name="Ng P."/>
            <person name="Nilsson R."/>
            <person name="Nishiguchi S."/>
            <person name="Nishikawa S."/>
            <person name="Nori F."/>
            <person name="Ohara O."/>
            <person name="Okazaki Y."/>
            <person name="Orlando V."/>
            <person name="Pang K.C."/>
            <person name="Pavan W.J."/>
            <person name="Pavesi G."/>
            <person name="Pesole G."/>
            <person name="Petrovsky N."/>
            <person name="Piazza S."/>
            <person name="Reed J."/>
            <person name="Reid J.F."/>
            <person name="Ring B.Z."/>
            <person name="Ringwald M."/>
            <person name="Rost B."/>
            <person name="Ruan Y."/>
            <person name="Salzberg S.L."/>
            <person name="Sandelin A."/>
            <person name="Schneider C."/>
            <person name="Schoenbach C."/>
            <person name="Sekiguchi K."/>
            <person name="Semple C.A."/>
            <person name="Seno S."/>
            <person name="Sessa L."/>
            <person name="Sheng Y."/>
            <person name="Shibata Y."/>
            <person name="Shimada H."/>
            <person name="Shimada K."/>
            <person name="Silva D."/>
            <person name="Sinclair B."/>
            <person name="Sperling S."/>
            <person name="Stupka E."/>
            <person name="Sugiura K."/>
            <person name="Sultana R."/>
            <person name="Takenaka Y."/>
            <person name="Taki K."/>
            <person name="Tammoja K."/>
            <person name="Tan S.L."/>
            <person name="Tang S."/>
            <person name="Taylor M.S."/>
            <person name="Tegner J."/>
            <person name="Teichmann S.A."/>
            <person name="Ueda H.R."/>
            <person name="van Nimwegen E."/>
            <person name="Verardo R."/>
            <person name="Wei C.L."/>
            <person name="Yagi K."/>
            <person name="Yamanishi H."/>
            <person name="Zabarovsky E."/>
            <person name="Zhu S."/>
            <person name="Zimmer A."/>
            <person name="Hide W."/>
            <person name="Bult C."/>
            <person name="Grimmond S.M."/>
            <person name="Teasdale R.D."/>
            <person name="Liu E.T."/>
            <person name="Brusic V."/>
            <person name="Quackenbush J."/>
            <person name="Wahlestedt C."/>
            <person name="Mattick J.S."/>
            <person name="Hume D.A."/>
            <person name="Kai C."/>
            <person name="Sasaki D."/>
            <person name="Tomaru Y."/>
            <person name="Fukuda S."/>
            <person name="Kanamori-Katayama M."/>
            <person name="Suzuki M."/>
            <person name="Aoki J."/>
            <person name="Arakawa T."/>
            <person name="Iida J."/>
            <person name="Imamura K."/>
            <person name="Itoh M."/>
            <person name="Kato T."/>
            <person name="Kawaji H."/>
            <person name="Kawagashira N."/>
            <person name="Kawashima T."/>
            <person name="Kojima M."/>
            <person name="Kondo S."/>
            <person name="Konno H."/>
            <person name="Nakano K."/>
            <person name="Ninomiya N."/>
            <person name="Nishio T."/>
            <person name="Okada M."/>
            <person name="Plessy C."/>
            <person name="Shibata K."/>
            <person name="Shiraki T."/>
            <person name="Suzuki S."/>
            <person name="Tagami M."/>
            <person name="Waki K."/>
            <person name="Watahiki A."/>
            <person name="Okamura-Oho Y."/>
            <person name="Suzuki H."/>
            <person name="Kawai J."/>
            <person name="Hayashizaki Y."/>
        </authorList>
    </citation>
    <scope>NUCLEOTIDE SEQUENCE [LARGE SCALE MRNA]</scope>
    <source>
        <strain>C57BL/6J</strain>
        <tissue>Head</tissue>
        <tissue>Spleen</tissue>
    </source>
</reference>
<reference key="2">
    <citation type="journal article" date="2004" name="Genome Res.">
        <title>The status, quality, and expansion of the NIH full-length cDNA project: the Mammalian Gene Collection (MGC).</title>
        <authorList>
            <consortium name="The MGC Project Team"/>
        </authorList>
    </citation>
    <scope>NUCLEOTIDE SEQUENCE [LARGE SCALE MRNA]</scope>
    <source>
        <strain>C57BL/6J</strain>
        <tissue>Brain</tissue>
        <tissue>Testis</tissue>
    </source>
</reference>
<reference key="3">
    <citation type="submission" date="2009-01" db="UniProtKB">
        <authorList>
            <person name="Lubec G."/>
            <person name="Sunyer B."/>
            <person name="Chen W.-Q."/>
        </authorList>
    </citation>
    <scope>PROTEIN SEQUENCE OF 41-53</scope>
    <scope>IDENTIFICATION BY MASS SPECTROMETRY</scope>
    <source>
        <strain>OF1</strain>
        <tissue>Hippocampus</tissue>
    </source>
</reference>
<reference key="4">
    <citation type="journal article" date="2010" name="Cell">
        <title>A tissue-specific atlas of mouse protein phosphorylation and expression.</title>
        <authorList>
            <person name="Huttlin E.L."/>
            <person name="Jedrychowski M.P."/>
            <person name="Elias J.E."/>
            <person name="Goswami T."/>
            <person name="Rad R."/>
            <person name="Beausoleil S.A."/>
            <person name="Villen J."/>
            <person name="Haas W."/>
            <person name="Sowa M.E."/>
            <person name="Gygi S.P."/>
        </authorList>
    </citation>
    <scope>IDENTIFICATION BY MASS SPECTROMETRY [LARGE SCALE ANALYSIS]</scope>
    <source>
        <tissue>Testis</tissue>
    </source>
</reference>
<evidence type="ECO:0000250" key="1"/>
<evidence type="ECO:0000305" key="2"/>
<accession>Q9CXU0</accession>
<accession>Q3U0W8</accession>
<accession>Q80VV0</accession>
<comment type="function">
    <text evidence="1">Component of the Mediator complex, a coactivator involved in the regulated transcription of nearly all RNA polymerase II-dependent genes. Mediator functions as a bridge to convey information from gene-specific regulatory proteins to the basal RNA polymerase II transcription machinery. Mediator is recruited to promoters by direct interactions with regulatory proteins and serves as a scaffold for the assembly of a functional preinitiation complex with RNA polymerase II and the general transcription factors (By similarity).</text>
</comment>
<comment type="subunit">
    <text evidence="1">Component of the Mediator complex, which is composed of MED1, MED4, MED6, MED7, MED8, MED9, MED10, MED11, MED12, MED13, MED13L, MED14, MED15, MED16, MED17, MED18, MED19, MED20, MED21, MED22, MED23, MED24, MED25, MED26, MED27, MED29, MED30, MED31, CCNC, CDK8 and CDC2L6/CDK11. The MED12, MED13, CCNC and CDK8 subunits form a distinct module termed the CDK8 module. Mediator containing the CDK8 module is less active than Mediator lacking this module in supporting transcriptional activation. Individual preparations of the Mediator complex lacking one or more distinct subunits have been variously termed ARC, CRSP, DRIP, PC2, SMCC and TRAP (By similarity).</text>
</comment>
<comment type="subcellular location">
    <subcellularLocation>
        <location evidence="2">Nucleus</location>
    </subcellularLocation>
</comment>
<comment type="similarity">
    <text evidence="2">Belongs to the Mediator complex subunit 10 family.</text>
</comment>
<sequence>MAEKFDHLEEHLEKFVENIRQLGIIVSDFQPSSQAGLSQKLNFIVTGLQDIDKCRQQLHDITVPLEVFEYIDQGRNPQLYTKECLERALAKNEQVKGKIDTMKKFKSLLIQELSKVFPEDMAKYRSIRGEDHPPS</sequence>
<protein>
    <recommendedName>
        <fullName>Mediator of RNA polymerase II transcription subunit 10</fullName>
    </recommendedName>
    <alternativeName>
        <fullName>Mediator complex subunit 10</fullName>
    </alternativeName>
</protein>
<name>MED10_MOUSE</name>
<proteinExistence type="evidence at protein level"/>
<keyword id="KW-0002">3D-structure</keyword>
<keyword id="KW-0010">Activator</keyword>
<keyword id="KW-0903">Direct protein sequencing</keyword>
<keyword id="KW-0539">Nucleus</keyword>
<keyword id="KW-1185">Reference proteome</keyword>
<keyword id="KW-0804">Transcription</keyword>
<keyword id="KW-0805">Transcription regulation</keyword>